<feature type="chain" id="PRO_0000236168" description="Lipid II:glycine glycyltransferase">
    <location>
        <begin position="1"/>
        <end position="421"/>
    </location>
</feature>
<organism>
    <name type="scientific">Staphylococcus aureus (strain bovine RF122 / ET3-1)</name>
    <dbReference type="NCBI Taxonomy" id="273036"/>
    <lineage>
        <taxon>Bacteria</taxon>
        <taxon>Bacillati</taxon>
        <taxon>Bacillota</taxon>
        <taxon>Bacilli</taxon>
        <taxon>Bacillales</taxon>
        <taxon>Staphylococcaceae</taxon>
        <taxon>Staphylococcus</taxon>
    </lineage>
</organism>
<gene>
    <name type="primary">femX</name>
    <name type="synonym">fmhB</name>
    <name type="ordered locus">SAB2134c</name>
</gene>
<comment type="function">
    <text evidence="1">Catalyzes the incorporation of the first glycine of the pentaglycine interpeptide bridge, which is characteristic of the S.aureus peptidoglycan. This glycine is added to the epsilon-amino group of the L-lysine of the membrane-bound lipid II intermediate (GlcNAc-(beta-1,4)-N-acetylmuramic acid(-L-Ala-D-iGln-L-Lys-D-Ala-D-Ala)-pyrophosphoryl-undecaprenol), using glycyl-tRNA(Gly) as donor, in a ribosome-independent mechanism (By similarity).</text>
</comment>
<comment type="catalytic activity">
    <reaction>
        <text>beta-D-GlcNAc-(1-&gt;4)-Mur2Ac(oyl-L-Ala-D-isoglutaminyl-L-Lys-D-Ala-D-Ala)-di-trans,octa-cis-undecaprenyl diphosphate + glycyl-tRNA(Gly) = beta-D-GlcNAc-(1-&gt;4)-Mur2Ac(oyl-L-Ala-D-isoglutaminyl-L-Lys-(N(6)-Gly)-D-Ala-D-Ala)-di-trans,octa-cis-undecaprenyl diphosphate + tRNA(Gly) + H(+)</text>
        <dbReference type="Rhea" id="RHEA:30435"/>
        <dbReference type="Rhea" id="RHEA-COMP:9664"/>
        <dbReference type="Rhea" id="RHEA-COMP:9683"/>
        <dbReference type="ChEBI" id="CHEBI:15378"/>
        <dbReference type="ChEBI" id="CHEBI:62233"/>
        <dbReference type="ChEBI" id="CHEBI:62234"/>
        <dbReference type="ChEBI" id="CHEBI:78442"/>
        <dbReference type="ChEBI" id="CHEBI:78522"/>
        <dbReference type="EC" id="2.3.2.16"/>
    </reaction>
</comment>
<comment type="subunit">
    <text evidence="1">Monomer.</text>
</comment>
<comment type="subcellular location">
    <subcellularLocation>
        <location evidence="2">Cytoplasm</location>
    </subcellularLocation>
</comment>
<comment type="similarity">
    <text evidence="2">Belongs to the FemABX family.</text>
</comment>
<dbReference type="EC" id="2.3.2.16"/>
<dbReference type="EMBL" id="AJ938182">
    <property type="protein sequence ID" value="CAI81823.1"/>
    <property type="molecule type" value="Genomic_DNA"/>
</dbReference>
<dbReference type="RefSeq" id="WP_000413857.1">
    <property type="nucleotide sequence ID" value="NC_007622.1"/>
</dbReference>
<dbReference type="SMR" id="Q2YYN5"/>
<dbReference type="KEGG" id="sab:SAB2134c"/>
<dbReference type="HOGENOM" id="CLU_048411_0_1_9"/>
<dbReference type="GO" id="GO:0005737">
    <property type="term" value="C:cytoplasm"/>
    <property type="evidence" value="ECO:0007669"/>
    <property type="project" value="UniProtKB-SubCell"/>
</dbReference>
<dbReference type="GO" id="GO:0016755">
    <property type="term" value="F:aminoacyltransferase activity"/>
    <property type="evidence" value="ECO:0007669"/>
    <property type="project" value="InterPro"/>
</dbReference>
<dbReference type="GO" id="GO:0071555">
    <property type="term" value="P:cell wall organization"/>
    <property type="evidence" value="ECO:0007669"/>
    <property type="project" value="UniProtKB-KW"/>
</dbReference>
<dbReference type="GO" id="GO:0009252">
    <property type="term" value="P:peptidoglycan biosynthetic process"/>
    <property type="evidence" value="ECO:0007669"/>
    <property type="project" value="UniProtKB-KW"/>
</dbReference>
<dbReference type="GO" id="GO:0008360">
    <property type="term" value="P:regulation of cell shape"/>
    <property type="evidence" value="ECO:0007669"/>
    <property type="project" value="UniProtKB-KW"/>
</dbReference>
<dbReference type="Gene3D" id="1.20.58.90">
    <property type="match status" value="1"/>
</dbReference>
<dbReference type="Gene3D" id="3.40.630.30">
    <property type="match status" value="2"/>
</dbReference>
<dbReference type="InterPro" id="IPR016181">
    <property type="entry name" value="Acyl_CoA_acyltransferase"/>
</dbReference>
<dbReference type="InterPro" id="IPR003447">
    <property type="entry name" value="FEMABX"/>
</dbReference>
<dbReference type="InterPro" id="IPR050644">
    <property type="entry name" value="PG_Glycine_Bridge_Synth"/>
</dbReference>
<dbReference type="PANTHER" id="PTHR36174">
    <property type="entry name" value="LIPID II:GLYCINE GLYCYLTRANSFERASE"/>
    <property type="match status" value="1"/>
</dbReference>
<dbReference type="PANTHER" id="PTHR36174:SF1">
    <property type="entry name" value="LIPID II:GLYCINE GLYCYLTRANSFERASE"/>
    <property type="match status" value="1"/>
</dbReference>
<dbReference type="Pfam" id="PF02388">
    <property type="entry name" value="FemAB"/>
    <property type="match status" value="1"/>
</dbReference>
<dbReference type="SUPFAM" id="SSF55729">
    <property type="entry name" value="Acyl-CoA N-acyltransferases (Nat)"/>
    <property type="match status" value="2"/>
</dbReference>
<dbReference type="PROSITE" id="PS51191">
    <property type="entry name" value="FEMABX"/>
    <property type="match status" value="1"/>
</dbReference>
<accession>Q2YYN5</accession>
<protein>
    <recommendedName>
        <fullName>Lipid II:glycine glycyltransferase</fullName>
        <ecNumber>2.3.2.16</ecNumber>
    </recommendedName>
    <alternativeName>
        <fullName>Factor essential for expression of methicillin resistance X</fullName>
    </alternativeName>
</protein>
<reference key="1">
    <citation type="journal article" date="2007" name="PLoS ONE">
        <title>Molecular correlates of host specialization in Staphylococcus aureus.</title>
        <authorList>
            <person name="Herron-Olson L."/>
            <person name="Fitzgerald J.R."/>
            <person name="Musser J.M."/>
            <person name="Kapur V."/>
        </authorList>
    </citation>
    <scope>NUCLEOTIDE SEQUENCE [LARGE SCALE GENOMIC DNA]</scope>
    <source>
        <strain>bovine RF122 / ET3-1</strain>
    </source>
</reference>
<sequence length="421" mass="48552">MEKMHITNQEHDAFVKSHPNGDLLQLTKWAETKKLTGWYARRIAVGRDGEIQGVAQLLFKKVPKLPYTLCYISRGFVVDYSNKEALNALLDSAKEIAKAEKAYAIKIDPDVEVDKGTDALQNLKALGFKHKGFKEGLSKDYIQPRMTMITPIDKNDDELLNSYERRNRSKVRLALKRGTTVERSDREGLKTFAELMKITGERDGFLTRDISYFENIYDALHEDGDAELFLVKLDPKENIAKVNQELNELHAEIAKWQQKMETSEKQAKKAQNMINDAQNKIAKNEDLKRDLEALEKEHPEGIYLSGALLMFAGSKSYYLYGASSNEFRDFLPNHHMQYTMMKYAREHGATTYDFGGTDNDPDKDSEHYGLWAFKKVWGTYLSEKIGEFDYVLNQPLYQLIEQVKPRLTKAKIKISRKLKRK</sequence>
<proteinExistence type="inferred from homology"/>
<keyword id="KW-0012">Acyltransferase</keyword>
<keyword id="KW-0133">Cell shape</keyword>
<keyword id="KW-0961">Cell wall biogenesis/degradation</keyword>
<keyword id="KW-0963">Cytoplasm</keyword>
<keyword id="KW-0573">Peptidoglycan synthesis</keyword>
<keyword id="KW-0808">Transferase</keyword>
<name>FEMX_STAAB</name>
<evidence type="ECO:0000250" key="1"/>
<evidence type="ECO:0000305" key="2"/>